<dbReference type="EMBL" id="BA000004">
    <property type="protein sequence ID" value="BAB07203.1"/>
    <property type="molecule type" value="Genomic_DNA"/>
</dbReference>
<dbReference type="PIR" id="D84085">
    <property type="entry name" value="D84085"/>
</dbReference>
<dbReference type="RefSeq" id="WP_010899616.1">
    <property type="nucleotide sequence ID" value="NC_002570.2"/>
</dbReference>
<dbReference type="SMR" id="Q9K786"/>
<dbReference type="STRING" id="272558.gene:10729397"/>
<dbReference type="GeneID" id="87599013"/>
<dbReference type="KEGG" id="bha:BH3484"/>
<dbReference type="eggNOG" id="COG0509">
    <property type="taxonomic scope" value="Bacteria"/>
</dbReference>
<dbReference type="HOGENOM" id="CLU_097408_2_2_9"/>
<dbReference type="Proteomes" id="UP000001258">
    <property type="component" value="Chromosome"/>
</dbReference>
<dbReference type="GO" id="GO:0005829">
    <property type="term" value="C:cytosol"/>
    <property type="evidence" value="ECO:0007669"/>
    <property type="project" value="TreeGrafter"/>
</dbReference>
<dbReference type="GO" id="GO:0005960">
    <property type="term" value="C:glycine cleavage complex"/>
    <property type="evidence" value="ECO:0007669"/>
    <property type="project" value="InterPro"/>
</dbReference>
<dbReference type="GO" id="GO:0019464">
    <property type="term" value="P:glycine decarboxylation via glycine cleavage system"/>
    <property type="evidence" value="ECO:0007669"/>
    <property type="project" value="UniProtKB-UniRule"/>
</dbReference>
<dbReference type="CDD" id="cd06848">
    <property type="entry name" value="GCS_H"/>
    <property type="match status" value="1"/>
</dbReference>
<dbReference type="Gene3D" id="2.40.50.100">
    <property type="match status" value="1"/>
</dbReference>
<dbReference type="HAMAP" id="MF_00272">
    <property type="entry name" value="GcvH"/>
    <property type="match status" value="1"/>
</dbReference>
<dbReference type="InterPro" id="IPR003016">
    <property type="entry name" value="2-oxoA_DH_lipoyl-BS"/>
</dbReference>
<dbReference type="InterPro" id="IPR000089">
    <property type="entry name" value="Biotin_lipoyl"/>
</dbReference>
<dbReference type="InterPro" id="IPR002930">
    <property type="entry name" value="GCV_H"/>
</dbReference>
<dbReference type="InterPro" id="IPR033753">
    <property type="entry name" value="GCV_H/Fam206"/>
</dbReference>
<dbReference type="InterPro" id="IPR017453">
    <property type="entry name" value="GCV_H_sub"/>
</dbReference>
<dbReference type="InterPro" id="IPR011053">
    <property type="entry name" value="Single_hybrid_motif"/>
</dbReference>
<dbReference type="NCBIfam" id="TIGR00527">
    <property type="entry name" value="gcvH"/>
    <property type="match status" value="1"/>
</dbReference>
<dbReference type="NCBIfam" id="NF002270">
    <property type="entry name" value="PRK01202.1"/>
    <property type="match status" value="1"/>
</dbReference>
<dbReference type="PANTHER" id="PTHR11715">
    <property type="entry name" value="GLYCINE CLEAVAGE SYSTEM H PROTEIN"/>
    <property type="match status" value="1"/>
</dbReference>
<dbReference type="PANTHER" id="PTHR11715:SF3">
    <property type="entry name" value="GLYCINE CLEAVAGE SYSTEM H PROTEIN-RELATED"/>
    <property type="match status" value="1"/>
</dbReference>
<dbReference type="Pfam" id="PF01597">
    <property type="entry name" value="GCV_H"/>
    <property type="match status" value="1"/>
</dbReference>
<dbReference type="SUPFAM" id="SSF51230">
    <property type="entry name" value="Single hybrid motif"/>
    <property type="match status" value="1"/>
</dbReference>
<dbReference type="PROSITE" id="PS50968">
    <property type="entry name" value="BIOTINYL_LIPOYL"/>
    <property type="match status" value="1"/>
</dbReference>
<dbReference type="PROSITE" id="PS00189">
    <property type="entry name" value="LIPOYL"/>
    <property type="match status" value="1"/>
</dbReference>
<keyword id="KW-0450">Lipoyl</keyword>
<keyword id="KW-1185">Reference proteome</keyword>
<evidence type="ECO:0000255" key="1">
    <source>
        <dbReference type="HAMAP-Rule" id="MF_00272"/>
    </source>
</evidence>
<evidence type="ECO:0000255" key="2">
    <source>
        <dbReference type="PROSITE-ProRule" id="PRU01066"/>
    </source>
</evidence>
<reference key="1">
    <citation type="journal article" date="2000" name="Nucleic Acids Res.">
        <title>Complete genome sequence of the alkaliphilic bacterium Bacillus halodurans and genomic sequence comparison with Bacillus subtilis.</title>
        <authorList>
            <person name="Takami H."/>
            <person name="Nakasone K."/>
            <person name="Takaki Y."/>
            <person name="Maeno G."/>
            <person name="Sasaki R."/>
            <person name="Masui N."/>
            <person name="Fuji F."/>
            <person name="Hirama C."/>
            <person name="Nakamura Y."/>
            <person name="Ogasawara N."/>
            <person name="Kuhara S."/>
            <person name="Horikoshi K."/>
        </authorList>
    </citation>
    <scope>NUCLEOTIDE SEQUENCE [LARGE SCALE GENOMIC DNA]</scope>
    <source>
        <strain>ATCC BAA-125 / DSM 18197 / FERM 7344 / JCM 9153 / C-125</strain>
    </source>
</reference>
<protein>
    <recommendedName>
        <fullName evidence="1">Glycine cleavage system H protein</fullName>
    </recommendedName>
    <alternativeName>
        <fullName evidence="1">Octanoyl/lipoyl carrier protein</fullName>
    </alternativeName>
</protein>
<comment type="function">
    <text evidence="1">The glycine cleavage system catalyzes the degradation of glycine. The H protein shuttles the methylamine group of glycine from the P protein to the T protein.</text>
</comment>
<comment type="function">
    <text evidence="1">Is also involved in protein lipoylation via its role as an octanoyl/lipoyl carrier protein intermediate.</text>
</comment>
<comment type="cofactor">
    <cofactor evidence="1">
        <name>(R)-lipoate</name>
        <dbReference type="ChEBI" id="CHEBI:83088"/>
    </cofactor>
    <text evidence="1">Binds 1 lipoyl cofactor covalently.</text>
</comment>
<comment type="subunit">
    <text evidence="1">The glycine cleavage system is composed of four proteins: P, T, L and H.</text>
</comment>
<comment type="similarity">
    <text evidence="1">Belongs to the GcvH family.</text>
</comment>
<proteinExistence type="inferred from homology"/>
<name>GCSH_HALH5</name>
<feature type="chain" id="PRO_0000166204" description="Glycine cleavage system H protein">
    <location>
        <begin position="1"/>
        <end position="128"/>
    </location>
</feature>
<feature type="domain" description="Lipoyl-binding" evidence="2">
    <location>
        <begin position="23"/>
        <end position="105"/>
    </location>
</feature>
<feature type="modified residue" description="N6-lipoyllysine" evidence="1">
    <location>
        <position position="64"/>
    </location>
</feature>
<accession>Q9K786</accession>
<gene>
    <name evidence="1" type="primary">gcvH</name>
    <name type="ordered locus">BH3484</name>
</gene>
<organism>
    <name type="scientific">Halalkalibacterium halodurans (strain ATCC BAA-125 / DSM 18197 / FERM 7344 / JCM 9153 / C-125)</name>
    <name type="common">Bacillus halodurans</name>
    <dbReference type="NCBI Taxonomy" id="272558"/>
    <lineage>
        <taxon>Bacteria</taxon>
        <taxon>Bacillati</taxon>
        <taxon>Bacillota</taxon>
        <taxon>Bacilli</taxon>
        <taxon>Bacillales</taxon>
        <taxon>Bacillaceae</taxon>
        <taxon>Halalkalibacterium (ex Joshi et al. 2022)</taxon>
    </lineage>
</organism>
<sequence length="128" mass="14421">MSNLPNELKYSEEHEWVKVEGDKVRIGITDFAQSELGDIVFVELPEVGDEVEADEPFGSVESVKTVSELYAPVSGKVVEVNEELDDNPEYVNESPYEKAWMIVVEPSDASQVEELMSADEYKEMISEE</sequence>